<sequence>MGPRLGVWLLLLLAALLLHEESSRAAAKGGCAGSGCGKCDCHGVKGQKGERGLPGLQGVIGFPGMQGPEGPQGPPGQKGDTGEPGLPGTKGTRGPSGVPGYPGNPGLPGIPGQDGPPGPPGIPGCNGTKGERGPVGPPGLPGFAGNPGPPGLPGMKGDPGEILGHIPGTLLKGERGYPGQPGAPGSPGLPGLQGPVGPPGFTGPPGPPGPPGPPGEKGQMGLSFQGPKGEKGDQGVSGPPGLPGQAQVITKGDTAMRGEKGQKGEPGFPGLPGFGEKGEPGKPGPRGKPGKDGEKGEKGSPGFPGDSGYPGQPGQDGLKGEKGEAGPPGLPGTVIGTGPLGEKGEPGYPGGPGAKGETGPKGFPGIPGQPGPPGFPTPGLIGAPGFPGDRGEKGEPGLPGVSLPGPSGRDGLPGPPGPPGPPGQPGHTNGIVECQPGPPGDQGPPGIPGQPGLTGEVGEKGQKGDSCLVCDTAELRGPPGPQGPPGEIGFPGQPGAKGDRGLPGRDGLEGLPGPQGAPGLMGQPGAKGEPGEIYFDIRLKGDKGDPGFPGQPGMPGRAGSPGRDGQPGLPGPRGSPGSVGLKGERGPPGGVGFPGSRGDIGPPGPPGFGPIGPIGDKGQIGFPGTPGAPGQPGPKGEAGKVVPLPGPPGAEGLPGSPGFQGPQGDRGFPGSPGRPGLPGEKGAIGQPGIGFPGPPGPKGVDGLPGDAGPPGNPGRQGFNGLPGNPGPPGQKGEPGVGLPGLKGLPGIPGIPGTPGEKGNVGGPGIPGEHGAIGPPGLQGLRGDPGPPGFQGPKGAPGVPGIGPPGAMGPPGGQGPPGSSGPPGVKGEKGFPGFPGLDMPGPKGDKGSQGLPGLTGQSGLPGLPGQQGTPGQPGIPGPKGEMGVMGTPGQPGSPGPAGVPGLPGAKGDHGFPGSSGPRGDPGFKGDKGDVGLPGKPGSMDKVDMGSMKGEKGDQGEKGQTGPTGDKGSRGDPGTPGVPGKDGQAGHPGQPGPKGDPGVSGIPGAPGLPGPKGSAGGMGLPGMPGPKGVAGIPGPQGIPGLPGDKGAKGEKGQAGLPGIGIPGRPGDKGDQGLAGFPGSPGEKGEKGSTGIPGMPGSPGPKGSPGSVGYPGSPGLPGEKGDKGLPGLDGIPGIKGEAGLPGKPGPTGPAGQKGEPGSDGIPGSVGEKGESGLPGRGFPGFPGSKGDKGSKGDVGFPGLSGSPGIPGSKGEQGFMGPPGPQGQPGLPGTPGHAVEGPKGDRGPQGQPGLPGRPGPMGPPGLPGLEGLKGERGNPGWPGTPGAPGPKGDPGFQGMPGIGGSPGITGAKGDVGPPGVPGFHGQKGAPGLQGVKGDQGDQGFPGTKGLPGPPGPPGPFSIIKGEPGLPGPEGPAGLKGLQGPPGPKGQQGVTGSVGLPGPPGEPGFDGAPGQKGETGPFGPPGPRGFPGPPGPDGLPGSMGPPGTPSVDHGFLVTRHSQTTDDPQCPPGTKILYHGYSLLYVQGNERAHGQDLGTAGSCLRKFSTMPFLFCNINNVCNFASRNDYSYWLSTPEPMPMSMAPITGENIRPFISRCAVCEAPAMVMAVHSQTIQIPQCPTGWSSLWIGYSFVMHTSAGAEGSGQALASPGSCLEEFRSAPFIECHGRGTCNYYANAYSFWLATIERSEMFKKPTPSTLKAGELRTHVSRCQVCMRRT</sequence>
<gene>
    <name evidence="1" type="primary">COL4A1</name>
</gene>
<comment type="function">
    <text evidence="2">Type IV collagen is the major structural component of glomerular basement membranes (GBM), forming a 'chicken-wire' meshwork together with laminins, proteoglycans and entactin/nidogen.</text>
</comment>
<comment type="function">
    <text evidence="1">Arresten, comprising the C-terminal NC1 domain, inhibits angiogenesis and tumor formation. The C-terminal half is found to possess the anti-angiogenic activity. Specifically inhibits endothelial cell proliferation, migration and tube formation.</text>
</comment>
<comment type="subunit">
    <text evidence="2 9">There are six type IV collagen isoforms, alpha 1(IV)-alpha 6(IV), each of which can form a triple helix structure with 2 other chains to generate type IV collagen network. Interacts with EFEMP2 (By similarity).</text>
</comment>
<comment type="subcellular location">
    <subcellularLocation>
        <location evidence="2">Secreted</location>
        <location evidence="2">Extracellular space</location>
        <location evidence="2">Extracellular matrix</location>
        <location evidence="2">Basement membrane</location>
    </subcellularLocation>
</comment>
<comment type="domain">
    <text evidence="2 8">Alpha chains of type IV collagen have a non-collagenous domain (NC1) at their C-terminus, frequent interruptions of the G-X-Y repeats in the long central triple-helical domain (which may cause flexibility in the triple helix), and a short N-terminal triple-helical 7S domain. NC1 domain mediates hexamerization of alpha chains of type IV collagen (By similarity).</text>
</comment>
<comment type="PTM">
    <text evidence="1">Lysines at the third position of the tripeptide repeating unit (G-X-Y) are hydroxylated in all cases. The modified lysines can be O-glycosylated.</text>
</comment>
<comment type="PTM">
    <text evidence="1">Contains 4-hydroxyproline. Prolines at the third position of the tripeptide repeating unit (G-X-Y) are hydroxylated in some or all of the chains.</text>
</comment>
<comment type="PTM">
    <text evidence="2 7">Contains 3-hydroxyproline (PubMed:24368846). This modification occurs on the first proline residue in the sequence motif Gly-Pro-Hyp, where Hyp is 4-hydroxyproline (By similarity).</text>
</comment>
<comment type="PTM">
    <text evidence="1">Type IV collagens contain numerous cysteine residues which are involved in inter- and intramolecular disulfide bonding. 12 of these, located in the NC1 domain, are conserved in all known type IV collagens.</text>
</comment>
<comment type="PTM">
    <text evidence="2 6">The trimeric structure of the NC1 domains is stabilized by covalent bonds (sulfilimine cross-links) between Lys and Met residues (PubMed:19729652). These cross-links are important for the mechanical stability of the basement membrane (By similarity). Sulfilimine cross-link is catalyzed by PXDN (By similarity).</text>
</comment>
<comment type="PTM">
    <text evidence="1">Proteolytic processing produces the C-terminal NC1 peptide, arresten.</text>
</comment>
<comment type="similarity">
    <text evidence="3">Belongs to the type IV collagen family.</text>
</comment>
<reference key="1">
    <citation type="journal article" date="2009" name="Genome Biol.">
        <title>A whole-genome assembly of the domestic cow, Bos taurus.</title>
        <authorList>
            <person name="Zimin A.V."/>
            <person name="Delcher A.L."/>
            <person name="Florea L."/>
            <person name="Kelley D.R."/>
            <person name="Schatz M.C."/>
            <person name="Puiu D."/>
            <person name="Hanrahan F."/>
            <person name="Pertea G."/>
            <person name="Van Tassell C.P."/>
            <person name="Sonstegard T.S."/>
            <person name="Marcais G."/>
            <person name="Roberts M."/>
            <person name="Subramanian P."/>
            <person name="Yorke J.A."/>
            <person name="Salzberg S.L."/>
        </authorList>
    </citation>
    <scope>NUCLEOTIDE SEQUENCE [LARGE SCALE GENOMIC DNA]</scope>
    <source>
        <strain>Hereford</strain>
    </source>
</reference>
<reference key="2">
    <citation type="journal article" date="1984" name="Biochem. J.">
        <title>Sequence comparison of pepsin-resistant segments of basement-membrane collagen alpha 1(IV) chains from bovine lens capsule and mouse tumour.</title>
        <authorList>
            <person name="Schuppan D."/>
            <person name="Glanville R.W."/>
            <person name="Timpl R."/>
            <person name="Dixit S.N."/>
            <person name="Kang A.H."/>
        </authorList>
    </citation>
    <scope>PARTIAL PROTEIN SEQUENCE</scope>
    <scope>PROLINE HYDROXYLATION</scope>
</reference>
<reference key="3">
    <citation type="journal article" date="2014" name="Proc. Natl. Acad. Sci. U.S.A.">
        <title>Biological role of prolyl 3-hydroxylation in type IV collagen.</title>
        <authorList>
            <person name="Pokidysheva E."/>
            <person name="Boudko S."/>
            <person name="Vranka J."/>
            <person name="Zientek K."/>
            <person name="Maddox K."/>
            <person name="Moser M."/>
            <person name="Faessler R."/>
            <person name="Ware J."/>
            <person name="Baechinger H.P."/>
        </authorList>
    </citation>
    <scope>PARTIAL PROTEIN SEQUENCE</scope>
    <scope>HYDROXYLATION AT PRO-204; PRO-207; PRO-210; PRO-587; PRO-602; PRO-605; PRO-647; PRO-1214 AND PRO-1424</scope>
    <scope>IDENTIFICATION BY MASS SPECTROMETRY</scope>
</reference>
<reference key="4">
    <citation type="journal article" date="2009" name="Science">
        <title>A sulfilimine bond identified in collagen IV.</title>
        <authorList>
            <person name="Vanacore R."/>
            <person name="Ham A.-J.L."/>
            <person name="Voehler M."/>
            <person name="Sanders C.R."/>
            <person name="Conrads T.P."/>
            <person name="Veenstra T.D."/>
            <person name="Sharpless K.B."/>
            <person name="Dawson P.E."/>
            <person name="Hudson B.G."/>
        </authorList>
    </citation>
    <scope>INTERCHAIN SULFILIMINE BONDS</scope>
    <scope>IDENTIFICATION BY MASS SPECTROMETRY</scope>
</reference>
<reference key="5">
    <citation type="journal article" date="2002" name="J. Biol. Chem.">
        <title>Crystal structure of NC1 domains. Structural basis for type IV collagen assembly in basement membranes.</title>
        <authorList>
            <person name="Sundaramoorthy M."/>
            <person name="Meiyappan M."/>
            <person name="Todd P."/>
            <person name="Hudson B.G."/>
        </authorList>
    </citation>
    <scope>X-RAY CRYSTALLOGRAPHY (2.0 ANGSTROMS) OF 1441-1669</scope>
    <scope>DISULFIDE BONDS</scope>
    <scope>SUBUNIT</scope>
</reference>
<name>CO4A1_BOVIN</name>
<evidence type="ECO:0000250" key="1">
    <source>
        <dbReference type="UniProtKB" id="P02462"/>
    </source>
</evidence>
<evidence type="ECO:0000250" key="2">
    <source>
        <dbReference type="UniProtKB" id="P02463"/>
    </source>
</evidence>
<evidence type="ECO:0000255" key="3">
    <source>
        <dbReference type="PROSITE-ProRule" id="PRU00736"/>
    </source>
</evidence>
<evidence type="ECO:0000256" key="4">
    <source>
        <dbReference type="SAM" id="MobiDB-lite"/>
    </source>
</evidence>
<evidence type="ECO:0000269" key="5">
    <source>
    </source>
</evidence>
<evidence type="ECO:0000269" key="6">
    <source>
    </source>
</evidence>
<evidence type="ECO:0000269" key="7">
    <source>
    </source>
</evidence>
<evidence type="ECO:0000305" key="8"/>
<evidence type="ECO:0000305" key="9">
    <source>
    </source>
</evidence>
<evidence type="ECO:0007829" key="10">
    <source>
        <dbReference type="PDB" id="1T60"/>
    </source>
</evidence>
<evidence type="ECO:0007829" key="11">
    <source>
        <dbReference type="PDB" id="1T61"/>
    </source>
</evidence>
<keyword id="KW-0002">3D-structure</keyword>
<keyword id="KW-0084">Basement membrane</keyword>
<keyword id="KW-0176">Collagen</keyword>
<keyword id="KW-0903">Direct protein sequencing</keyword>
<keyword id="KW-1015">Disulfide bond</keyword>
<keyword id="KW-0272">Extracellular matrix</keyword>
<keyword id="KW-0379">Hydroxylation</keyword>
<keyword id="KW-1185">Reference proteome</keyword>
<keyword id="KW-0677">Repeat</keyword>
<keyword id="KW-0964">Secreted</keyword>
<keyword id="KW-0732">Signal</keyword>
<proteinExistence type="evidence at protein level"/>
<protein>
    <recommendedName>
        <fullName evidence="1">Collagen alpha-1(IV) chain</fullName>
    </recommendedName>
    <component>
        <recommendedName>
            <fullName>Arresten</fullName>
        </recommendedName>
    </component>
</protein>
<organism>
    <name type="scientific">Bos taurus</name>
    <name type="common">Bovine</name>
    <dbReference type="NCBI Taxonomy" id="9913"/>
    <lineage>
        <taxon>Eukaryota</taxon>
        <taxon>Metazoa</taxon>
        <taxon>Chordata</taxon>
        <taxon>Craniata</taxon>
        <taxon>Vertebrata</taxon>
        <taxon>Euteleostomi</taxon>
        <taxon>Mammalia</taxon>
        <taxon>Eutheria</taxon>
        <taxon>Laurasiatheria</taxon>
        <taxon>Artiodactyla</taxon>
        <taxon>Ruminantia</taxon>
        <taxon>Pecora</taxon>
        <taxon>Bovidae</taxon>
        <taxon>Bovinae</taxon>
        <taxon>Bos</taxon>
    </lineage>
</organism>
<accession>Q7SIB2</accession>
<accession>G1K238</accession>
<feature type="signal peptide" evidence="1">
    <location>
        <begin position="1"/>
        <end position="27"/>
    </location>
</feature>
<feature type="chain" id="PRO_0000059399" description="Collagen alpha-1(IV) chain">
    <location>
        <begin position="28"/>
        <end position="1669"/>
    </location>
</feature>
<feature type="propeptide" id="PRO_0000441824" description="N-terminal propeptide (7S domain)" evidence="1">
    <location>
        <begin position="28"/>
        <end position="172"/>
    </location>
</feature>
<feature type="chain" id="PRO_0000441825" description="Arresten">
    <location>
        <begin position="1445"/>
        <end position="1669"/>
    </location>
</feature>
<feature type="domain" description="Collagen IV NC1" evidence="3">
    <location>
        <begin position="1445"/>
        <end position="1669"/>
    </location>
</feature>
<feature type="region of interest" description="Disordered" evidence="4">
    <location>
        <begin position="50"/>
        <end position="1445"/>
    </location>
</feature>
<feature type="region of interest" description="Triple-helical region" evidence="8">
    <location>
        <begin position="173"/>
        <end position="1440"/>
    </location>
</feature>
<feature type="compositionally biased region" description="Pro residues" evidence="4">
    <location>
        <begin position="196"/>
        <end position="214"/>
    </location>
</feature>
<feature type="compositionally biased region" description="Basic and acidic residues" evidence="4">
    <location>
        <begin position="254"/>
        <end position="263"/>
    </location>
</feature>
<feature type="compositionally biased region" description="Basic and acidic residues" evidence="4">
    <location>
        <begin position="289"/>
        <end position="298"/>
    </location>
</feature>
<feature type="compositionally biased region" description="Gly residues" evidence="4">
    <location>
        <begin position="347"/>
        <end position="356"/>
    </location>
</feature>
<feature type="compositionally biased region" description="Low complexity" evidence="4">
    <location>
        <begin position="357"/>
        <end position="366"/>
    </location>
</feature>
<feature type="compositionally biased region" description="Pro residues" evidence="4">
    <location>
        <begin position="367"/>
        <end position="376"/>
    </location>
</feature>
<feature type="compositionally biased region" description="Low complexity" evidence="4">
    <location>
        <begin position="396"/>
        <end position="412"/>
    </location>
</feature>
<feature type="compositionally biased region" description="Pro residues" evidence="4">
    <location>
        <begin position="413"/>
        <end position="424"/>
    </location>
</feature>
<feature type="compositionally biased region" description="Pro residues" evidence="4">
    <location>
        <begin position="436"/>
        <end position="448"/>
    </location>
</feature>
<feature type="compositionally biased region" description="Low complexity" evidence="4">
    <location>
        <begin position="485"/>
        <end position="494"/>
    </location>
</feature>
<feature type="compositionally biased region" description="Basic and acidic residues" evidence="4">
    <location>
        <begin position="497"/>
        <end position="508"/>
    </location>
</feature>
<feature type="compositionally biased region" description="Basic and acidic residues" evidence="4">
    <location>
        <begin position="535"/>
        <end position="545"/>
    </location>
</feature>
<feature type="compositionally biased region" description="Gly residues" evidence="4">
    <location>
        <begin position="586"/>
        <end position="595"/>
    </location>
</feature>
<feature type="compositionally biased region" description="Gly residues" evidence="4">
    <location>
        <begin position="758"/>
        <end position="767"/>
    </location>
</feature>
<feature type="compositionally biased region" description="Gly residues" evidence="4">
    <location>
        <begin position="797"/>
        <end position="817"/>
    </location>
</feature>
<feature type="compositionally biased region" description="Low complexity" evidence="4">
    <location>
        <begin position="847"/>
        <end position="871"/>
    </location>
</feature>
<feature type="compositionally biased region" description="Basic and acidic residues" evidence="4">
    <location>
        <begin position="937"/>
        <end position="955"/>
    </location>
</feature>
<feature type="compositionally biased region" description="Gly residues" evidence="4">
    <location>
        <begin position="1011"/>
        <end position="1020"/>
    </location>
</feature>
<feature type="compositionally biased region" description="Low complexity" evidence="4">
    <location>
        <begin position="1030"/>
        <end position="1040"/>
    </location>
</feature>
<feature type="compositionally biased region" description="Low complexity" evidence="4">
    <location>
        <begin position="1101"/>
        <end position="1114"/>
    </location>
</feature>
<feature type="compositionally biased region" description="Low complexity" evidence="4">
    <location>
        <begin position="1193"/>
        <end position="1212"/>
    </location>
</feature>
<feature type="compositionally biased region" description="Pro residues" evidence="4">
    <location>
        <begin position="1247"/>
        <end position="1258"/>
    </location>
</feature>
<feature type="compositionally biased region" description="Gly residues" evidence="4">
    <location>
        <begin position="1290"/>
        <end position="1299"/>
    </location>
</feature>
<feature type="compositionally biased region" description="Pro residues" evidence="4">
    <location>
        <begin position="1413"/>
        <end position="1428"/>
    </location>
</feature>
<feature type="modified residue" description="3-hydroxyproline" evidence="7">
    <location>
        <position position="204"/>
    </location>
</feature>
<feature type="modified residue" description="3-hydroxyproline" evidence="7">
    <location>
        <position position="207"/>
    </location>
</feature>
<feature type="modified residue" description="3-hydroxyproline" evidence="7">
    <location>
        <position position="210"/>
    </location>
</feature>
<feature type="modified residue" description="3-hydroxyproline" evidence="7">
    <location>
        <position position="587"/>
    </location>
</feature>
<feature type="modified residue" description="3-hydroxyproline" evidence="7">
    <location>
        <position position="602"/>
    </location>
</feature>
<feature type="modified residue" description="4-hydroxyproline" evidence="2">
    <location>
        <position position="603"/>
    </location>
</feature>
<feature type="modified residue" description="3-hydroxyproline" evidence="7">
    <location>
        <position position="605"/>
    </location>
</feature>
<feature type="modified residue" description="4-hydroxyproline" evidence="2">
    <location>
        <position position="606"/>
    </location>
</feature>
<feature type="modified residue" description="4-hydroxyproline" evidence="2">
    <location>
        <position position="623"/>
    </location>
</feature>
<feature type="modified residue" description="4-hydroxyproline" evidence="2">
    <location>
        <position position="626"/>
    </location>
</feature>
<feature type="modified residue" description="4-hydroxyproline" evidence="2">
    <location>
        <position position="629"/>
    </location>
</feature>
<feature type="modified residue" description="4-hydroxyproline" evidence="2">
    <location>
        <position position="632"/>
    </location>
</feature>
<feature type="modified residue" description="3-hydroxyproline" evidence="7">
    <location>
        <position position="647"/>
    </location>
</feature>
<feature type="modified residue" description="3-hydroxyproline" evidence="7">
    <location>
        <position position="1214"/>
    </location>
</feature>
<feature type="modified residue" description="3-hydroxyproline" evidence="7">
    <location>
        <position position="1424"/>
    </location>
</feature>
<feature type="disulfide bond" evidence="3 5">
    <location>
        <begin position="1460"/>
        <end position="1551"/>
    </location>
</feature>
<feature type="disulfide bond" evidence="3 5">
    <location>
        <begin position="1493"/>
        <end position="1548"/>
    </location>
</feature>
<feature type="disulfide bond" evidence="3 5">
    <location>
        <begin position="1505"/>
        <end position="1511"/>
    </location>
</feature>
<feature type="disulfide bond" evidence="3 5">
    <location>
        <begin position="1570"/>
        <end position="1665"/>
    </location>
</feature>
<feature type="disulfide bond" evidence="3 5">
    <location>
        <begin position="1604"/>
        <end position="1662"/>
    </location>
</feature>
<feature type="disulfide bond" evidence="3 5">
    <location>
        <begin position="1616"/>
        <end position="1622"/>
    </location>
</feature>
<feature type="cross-link" description="S-Lysyl-methionine sulfilimine (Met-Lys) (interchain with K-1651)" evidence="6">
    <location>
        <position position="1533"/>
    </location>
</feature>
<feature type="cross-link" description="S-Lysyl-methionine sulfilimine (Lys-Met) (interchain with M-1533)" evidence="6">
    <location>
        <position position="1651"/>
    </location>
</feature>
<feature type="strand" evidence="10">
    <location>
        <begin position="1446"/>
        <end position="1451"/>
    </location>
</feature>
<feature type="strand" evidence="10">
    <location>
        <begin position="1453"/>
        <end position="1456"/>
    </location>
</feature>
<feature type="strand" evidence="10">
    <location>
        <begin position="1465"/>
        <end position="1478"/>
    </location>
</feature>
<feature type="strand" evidence="10">
    <location>
        <begin position="1481"/>
        <end position="1484"/>
    </location>
</feature>
<feature type="helix" evidence="10">
    <location>
        <begin position="1490"/>
        <end position="1492"/>
    </location>
</feature>
<feature type="strand" evidence="10">
    <location>
        <begin position="1493"/>
        <end position="1496"/>
    </location>
</feature>
<feature type="strand" evidence="10">
    <location>
        <begin position="1502"/>
        <end position="1505"/>
    </location>
</feature>
<feature type="strand" evidence="10">
    <location>
        <begin position="1511"/>
        <end position="1514"/>
    </location>
</feature>
<feature type="strand" evidence="10">
    <location>
        <begin position="1519"/>
        <end position="1524"/>
    </location>
</feature>
<feature type="helix" evidence="10">
    <location>
        <begin position="1538"/>
        <end position="1544"/>
    </location>
</feature>
<feature type="strand" evidence="10">
    <location>
        <begin position="1547"/>
        <end position="1555"/>
    </location>
</feature>
<feature type="strand" evidence="10">
    <location>
        <begin position="1557"/>
        <end position="1561"/>
    </location>
</feature>
<feature type="strand" evidence="10">
    <location>
        <begin position="1563"/>
        <end position="1566"/>
    </location>
</feature>
<feature type="strand" evidence="10">
    <location>
        <begin position="1575"/>
        <end position="1587"/>
    </location>
</feature>
<feature type="helix" evidence="10">
    <location>
        <begin position="1589"/>
        <end position="1591"/>
    </location>
</feature>
<feature type="strand" evidence="10">
    <location>
        <begin position="1593"/>
        <end position="1595"/>
    </location>
</feature>
<feature type="helix" evidence="10">
    <location>
        <begin position="1601"/>
        <end position="1603"/>
    </location>
</feature>
<feature type="strand" evidence="10">
    <location>
        <begin position="1604"/>
        <end position="1607"/>
    </location>
</feature>
<feature type="strand" evidence="10">
    <location>
        <begin position="1613"/>
        <end position="1617"/>
    </location>
</feature>
<feature type="strand" evidence="11">
    <location>
        <begin position="1620"/>
        <end position="1623"/>
    </location>
</feature>
<feature type="strand" evidence="10">
    <location>
        <begin position="1629"/>
        <end position="1634"/>
    </location>
</feature>
<feature type="helix" evidence="10">
    <location>
        <begin position="1638"/>
        <end position="1640"/>
    </location>
</feature>
<feature type="strand" evidence="10">
    <location>
        <begin position="1648"/>
        <end position="1650"/>
    </location>
</feature>
<feature type="helix" evidence="10">
    <location>
        <begin position="1656"/>
        <end position="1658"/>
    </location>
</feature>
<feature type="strand" evidence="10">
    <location>
        <begin position="1661"/>
        <end position="1666"/>
    </location>
</feature>
<dbReference type="EMBL" id="DAAA02034907">
    <property type="status" value="NOT_ANNOTATED_CDS"/>
    <property type="molecule type" value="Genomic_DNA"/>
</dbReference>
<dbReference type="EMBL" id="DAAA02034908">
    <property type="status" value="NOT_ANNOTATED_CDS"/>
    <property type="molecule type" value="Genomic_DNA"/>
</dbReference>
<dbReference type="EMBL" id="DAAA02034909">
    <property type="status" value="NOT_ANNOTATED_CDS"/>
    <property type="molecule type" value="Genomic_DNA"/>
</dbReference>
<dbReference type="RefSeq" id="NP_001159983.2">
    <property type="nucleotide sequence ID" value="NM_001166511.3"/>
</dbReference>
<dbReference type="PDB" id="1M3D">
    <property type="method" value="X-ray"/>
    <property type="resolution" value="2.00 A"/>
    <property type="chains" value="A/B/D/E/G/H/J/K=1441-1669"/>
</dbReference>
<dbReference type="PDB" id="1T60">
    <property type="method" value="X-ray"/>
    <property type="resolution" value="1.50 A"/>
    <property type="chains" value="A/B/D/E/G/H/J/K/M/N/P/Q/S/T/V/W=1441-1669"/>
</dbReference>
<dbReference type="PDB" id="1T61">
    <property type="method" value="X-ray"/>
    <property type="resolution" value="1.50 A"/>
    <property type="chains" value="A/B/D/E=1441-1669"/>
</dbReference>
<dbReference type="PDBsum" id="1M3D"/>
<dbReference type="PDBsum" id="1T60"/>
<dbReference type="PDBsum" id="1T61"/>
<dbReference type="SMR" id="Q7SIB2"/>
<dbReference type="ComplexPortal" id="CPX-3107">
    <property type="entry name" value="Collagen type IV trimer variant 1"/>
</dbReference>
<dbReference type="FunCoup" id="Q7SIB2">
    <property type="interactions" value="1"/>
</dbReference>
<dbReference type="STRING" id="9913.ENSBTAP00000035211"/>
<dbReference type="GlyConnect" id="108">
    <property type="glycosylation" value="20 N-Linked glycans"/>
</dbReference>
<dbReference type="GlyCosmos" id="Q7SIB2">
    <property type="glycosylation" value="No site information, 35 glycans"/>
</dbReference>
<dbReference type="GlyGen" id="Q7SIB2">
    <property type="glycosylation" value="1 site, 35 N-linked glycans (1 site)"/>
</dbReference>
<dbReference type="PaxDb" id="9913-ENSBTAP00000035211"/>
<dbReference type="Ensembl" id="ENSBTAT00000035335.5">
    <property type="protein sequence ID" value="ENSBTAP00000035211.4"/>
    <property type="gene ID" value="ENSBTAG00000012849.7"/>
</dbReference>
<dbReference type="GeneID" id="282191"/>
<dbReference type="VEuPathDB" id="HostDB:ENSBTAG00000012849"/>
<dbReference type="VGNC" id="VGNC:50081">
    <property type="gene designation" value="COL4A1"/>
</dbReference>
<dbReference type="eggNOG" id="KOG3544">
    <property type="taxonomic scope" value="Eukaryota"/>
</dbReference>
<dbReference type="GeneTree" id="ENSGT00940000157678"/>
<dbReference type="HOGENOM" id="CLU_002023_1_0_1"/>
<dbReference type="InParanoid" id="Q7SIB2"/>
<dbReference type="OMA" id="WEPWQAS"/>
<dbReference type="OrthoDB" id="10071882at2759"/>
<dbReference type="TreeFam" id="TF316865"/>
<dbReference type="Reactome" id="R-BTA-1442490">
    <property type="pathway name" value="Collagen degradation"/>
</dbReference>
<dbReference type="Reactome" id="R-BTA-1474244">
    <property type="pathway name" value="Extracellular matrix organization"/>
</dbReference>
<dbReference type="Reactome" id="R-BTA-1650814">
    <property type="pathway name" value="Collagen biosynthesis and modifying enzymes"/>
</dbReference>
<dbReference type="Reactome" id="R-BTA-186797">
    <property type="pathway name" value="Signaling by PDGF"/>
</dbReference>
<dbReference type="Reactome" id="R-BTA-2022090">
    <property type="pathway name" value="Assembly of collagen fibrils and other multimeric structures"/>
</dbReference>
<dbReference type="Reactome" id="R-BTA-216083">
    <property type="pathway name" value="Integrin cell surface interactions"/>
</dbReference>
<dbReference type="Reactome" id="R-BTA-2243919">
    <property type="pathway name" value="Crosslinking of collagen fibrils"/>
</dbReference>
<dbReference type="Reactome" id="R-BTA-3000157">
    <property type="pathway name" value="Laminin interactions"/>
</dbReference>
<dbReference type="Reactome" id="R-BTA-3000171">
    <property type="pathway name" value="Non-integrin membrane-ECM interactions"/>
</dbReference>
<dbReference type="EvolutionaryTrace" id="Q7SIB2"/>
<dbReference type="Proteomes" id="UP000009136">
    <property type="component" value="Chromosome 12"/>
</dbReference>
<dbReference type="Bgee" id="ENSBTAG00000012849">
    <property type="expression patterns" value="Expressed in theca cell and 104 other cell types or tissues"/>
</dbReference>
<dbReference type="GO" id="GO:0005604">
    <property type="term" value="C:basement membrane"/>
    <property type="evidence" value="ECO:0007669"/>
    <property type="project" value="UniProtKB-SubCell"/>
</dbReference>
<dbReference type="GO" id="GO:0005581">
    <property type="term" value="C:collagen trimer"/>
    <property type="evidence" value="ECO:0007669"/>
    <property type="project" value="UniProtKB-KW"/>
</dbReference>
<dbReference type="GO" id="GO:0062023">
    <property type="term" value="C:collagen-containing extracellular matrix"/>
    <property type="evidence" value="ECO:0000318"/>
    <property type="project" value="GO_Central"/>
</dbReference>
<dbReference type="GO" id="GO:0005615">
    <property type="term" value="C:extracellular space"/>
    <property type="evidence" value="ECO:0000318"/>
    <property type="project" value="GO_Central"/>
</dbReference>
<dbReference type="GO" id="GO:0030020">
    <property type="term" value="F:extracellular matrix structural constituent conferring tensile strength"/>
    <property type="evidence" value="ECO:0000318"/>
    <property type="project" value="GO_Central"/>
</dbReference>
<dbReference type="FunFam" id="2.170.240.10:FF:000001">
    <property type="entry name" value="Collagen IV alpha 1 chain"/>
    <property type="match status" value="1"/>
</dbReference>
<dbReference type="Gene3D" id="2.170.240.10">
    <property type="entry name" value="Collagen IV, non-collagenous"/>
    <property type="match status" value="1"/>
</dbReference>
<dbReference type="InterPro" id="IPR008160">
    <property type="entry name" value="Collagen"/>
</dbReference>
<dbReference type="InterPro" id="IPR001442">
    <property type="entry name" value="Collagen_IV_NC"/>
</dbReference>
<dbReference type="InterPro" id="IPR036954">
    <property type="entry name" value="Collagen_IV_NC_sf"/>
</dbReference>
<dbReference type="InterPro" id="IPR050149">
    <property type="entry name" value="Collagen_superfamily"/>
</dbReference>
<dbReference type="InterPro" id="IPR016187">
    <property type="entry name" value="CTDL_fold"/>
</dbReference>
<dbReference type="PANTHER" id="PTHR24023">
    <property type="entry name" value="COLLAGEN ALPHA"/>
    <property type="match status" value="1"/>
</dbReference>
<dbReference type="PANTHER" id="PTHR24023:SF1082">
    <property type="entry name" value="COLLAGEN TRIPLE HELIX REPEAT"/>
    <property type="match status" value="1"/>
</dbReference>
<dbReference type="Pfam" id="PF01413">
    <property type="entry name" value="C4"/>
    <property type="match status" value="2"/>
</dbReference>
<dbReference type="Pfam" id="PF01391">
    <property type="entry name" value="Collagen"/>
    <property type="match status" value="18"/>
</dbReference>
<dbReference type="SMART" id="SM00111">
    <property type="entry name" value="C4"/>
    <property type="match status" value="2"/>
</dbReference>
<dbReference type="SUPFAM" id="SSF56436">
    <property type="entry name" value="C-type lectin-like"/>
    <property type="match status" value="2"/>
</dbReference>
<dbReference type="PROSITE" id="PS51403">
    <property type="entry name" value="NC1_IV"/>
    <property type="match status" value="1"/>
</dbReference>